<proteinExistence type="inferred from homology"/>
<accession>A8G8U9</accession>
<reference key="1">
    <citation type="submission" date="2007-09" db="EMBL/GenBank/DDBJ databases">
        <title>Complete sequence of chromosome of Serratia proteamaculans 568.</title>
        <authorList>
            <consortium name="US DOE Joint Genome Institute"/>
            <person name="Copeland A."/>
            <person name="Lucas S."/>
            <person name="Lapidus A."/>
            <person name="Barry K."/>
            <person name="Glavina del Rio T."/>
            <person name="Dalin E."/>
            <person name="Tice H."/>
            <person name="Pitluck S."/>
            <person name="Chain P."/>
            <person name="Malfatti S."/>
            <person name="Shin M."/>
            <person name="Vergez L."/>
            <person name="Schmutz J."/>
            <person name="Larimer F."/>
            <person name="Land M."/>
            <person name="Hauser L."/>
            <person name="Kyrpides N."/>
            <person name="Kim E."/>
            <person name="Taghavi S."/>
            <person name="Newman L."/>
            <person name="Vangronsveld J."/>
            <person name="van der Lelie D."/>
            <person name="Richardson P."/>
        </authorList>
    </citation>
    <scope>NUCLEOTIDE SEQUENCE [LARGE SCALE GENOMIC DNA]</scope>
    <source>
        <strain>568</strain>
    </source>
</reference>
<name>HFQ_SERP5</name>
<feature type="chain" id="PRO_1000060241" description="RNA-binding protein Hfq">
    <location>
        <begin position="1"/>
        <end position="102"/>
    </location>
</feature>
<feature type="domain" description="Sm" evidence="2">
    <location>
        <begin position="9"/>
        <end position="68"/>
    </location>
</feature>
<feature type="region of interest" description="Disordered" evidence="3">
    <location>
        <begin position="64"/>
        <end position="102"/>
    </location>
</feature>
<feature type="compositionally biased region" description="Polar residues" evidence="3">
    <location>
        <begin position="70"/>
        <end position="96"/>
    </location>
</feature>
<protein>
    <recommendedName>
        <fullName evidence="1">RNA-binding protein Hfq</fullName>
    </recommendedName>
</protein>
<comment type="function">
    <text evidence="1">RNA chaperone that binds small regulatory RNA (sRNAs) and mRNAs to facilitate mRNA translational regulation in response to envelope stress, environmental stress and changes in metabolite concentrations. Also binds with high specificity to tRNAs.</text>
</comment>
<comment type="subunit">
    <text evidence="1">Homohexamer.</text>
</comment>
<comment type="similarity">
    <text evidence="1">Belongs to the Hfq family.</text>
</comment>
<organism>
    <name type="scientific">Serratia proteamaculans (strain 568)</name>
    <dbReference type="NCBI Taxonomy" id="399741"/>
    <lineage>
        <taxon>Bacteria</taxon>
        <taxon>Pseudomonadati</taxon>
        <taxon>Pseudomonadota</taxon>
        <taxon>Gammaproteobacteria</taxon>
        <taxon>Enterobacterales</taxon>
        <taxon>Yersiniaceae</taxon>
        <taxon>Serratia</taxon>
    </lineage>
</organism>
<gene>
    <name evidence="1" type="primary">hfq</name>
    <name type="ordered locus">Spro_0431</name>
</gene>
<sequence length="102" mass="11266">MAKGQSLQDPFLNALRRERVPVSIYLVNGIKLQGQIESFDQFVILLKNTVSQMVYKHAISTVVPSRPVSHHSNTPSGGTSNYHHGNNPSAPQQPQQESDDAE</sequence>
<keyword id="KW-0694">RNA-binding</keyword>
<keyword id="KW-0346">Stress response</keyword>
<dbReference type="EMBL" id="CP000826">
    <property type="protein sequence ID" value="ABV39539.1"/>
    <property type="molecule type" value="Genomic_DNA"/>
</dbReference>
<dbReference type="SMR" id="A8G8U9"/>
<dbReference type="STRING" id="399741.Spro_0431"/>
<dbReference type="KEGG" id="spe:Spro_0431"/>
<dbReference type="eggNOG" id="COG1923">
    <property type="taxonomic scope" value="Bacteria"/>
</dbReference>
<dbReference type="HOGENOM" id="CLU_113688_2_1_6"/>
<dbReference type="OrthoDB" id="9799751at2"/>
<dbReference type="GO" id="GO:0005829">
    <property type="term" value="C:cytosol"/>
    <property type="evidence" value="ECO:0007669"/>
    <property type="project" value="TreeGrafter"/>
</dbReference>
<dbReference type="GO" id="GO:0003723">
    <property type="term" value="F:RNA binding"/>
    <property type="evidence" value="ECO:0007669"/>
    <property type="project" value="UniProtKB-UniRule"/>
</dbReference>
<dbReference type="GO" id="GO:0006355">
    <property type="term" value="P:regulation of DNA-templated transcription"/>
    <property type="evidence" value="ECO:0007669"/>
    <property type="project" value="InterPro"/>
</dbReference>
<dbReference type="GO" id="GO:0043487">
    <property type="term" value="P:regulation of RNA stability"/>
    <property type="evidence" value="ECO:0007669"/>
    <property type="project" value="TreeGrafter"/>
</dbReference>
<dbReference type="GO" id="GO:0045974">
    <property type="term" value="P:regulation of translation, ncRNA-mediated"/>
    <property type="evidence" value="ECO:0007669"/>
    <property type="project" value="TreeGrafter"/>
</dbReference>
<dbReference type="CDD" id="cd01716">
    <property type="entry name" value="Hfq"/>
    <property type="match status" value="1"/>
</dbReference>
<dbReference type="FunFam" id="2.30.30.100:FF:000001">
    <property type="entry name" value="RNA-binding protein Hfq"/>
    <property type="match status" value="1"/>
</dbReference>
<dbReference type="Gene3D" id="2.30.30.100">
    <property type="match status" value="1"/>
</dbReference>
<dbReference type="HAMAP" id="MF_00436">
    <property type="entry name" value="Hfq"/>
    <property type="match status" value="1"/>
</dbReference>
<dbReference type="InterPro" id="IPR005001">
    <property type="entry name" value="Hfq"/>
</dbReference>
<dbReference type="InterPro" id="IPR010920">
    <property type="entry name" value="LSM_dom_sf"/>
</dbReference>
<dbReference type="InterPro" id="IPR047575">
    <property type="entry name" value="Sm"/>
</dbReference>
<dbReference type="NCBIfam" id="TIGR02383">
    <property type="entry name" value="Hfq"/>
    <property type="match status" value="1"/>
</dbReference>
<dbReference type="NCBIfam" id="NF001602">
    <property type="entry name" value="PRK00395.1"/>
    <property type="match status" value="1"/>
</dbReference>
<dbReference type="PANTHER" id="PTHR34772">
    <property type="entry name" value="RNA-BINDING PROTEIN HFQ"/>
    <property type="match status" value="1"/>
</dbReference>
<dbReference type="PANTHER" id="PTHR34772:SF1">
    <property type="entry name" value="RNA-BINDING PROTEIN HFQ"/>
    <property type="match status" value="1"/>
</dbReference>
<dbReference type="Pfam" id="PF17209">
    <property type="entry name" value="Hfq"/>
    <property type="match status" value="1"/>
</dbReference>
<dbReference type="SUPFAM" id="SSF50182">
    <property type="entry name" value="Sm-like ribonucleoproteins"/>
    <property type="match status" value="1"/>
</dbReference>
<dbReference type="PROSITE" id="PS52002">
    <property type="entry name" value="SM"/>
    <property type="match status" value="1"/>
</dbReference>
<evidence type="ECO:0000255" key="1">
    <source>
        <dbReference type="HAMAP-Rule" id="MF_00436"/>
    </source>
</evidence>
<evidence type="ECO:0000255" key="2">
    <source>
        <dbReference type="PROSITE-ProRule" id="PRU01346"/>
    </source>
</evidence>
<evidence type="ECO:0000256" key="3">
    <source>
        <dbReference type="SAM" id="MobiDB-lite"/>
    </source>
</evidence>